<evidence type="ECO:0000255" key="1">
    <source>
        <dbReference type="HAMAP-Rule" id="MF_01356"/>
    </source>
</evidence>
<reference key="1">
    <citation type="journal article" date="2009" name="Appl. Environ. Microbiol.">
        <title>Three genomes from the phylum Acidobacteria provide insight into the lifestyles of these microorganisms in soils.</title>
        <authorList>
            <person name="Ward N.L."/>
            <person name="Challacombe J.F."/>
            <person name="Janssen P.H."/>
            <person name="Henrissat B."/>
            <person name="Coutinho P.M."/>
            <person name="Wu M."/>
            <person name="Xie G."/>
            <person name="Haft D.H."/>
            <person name="Sait M."/>
            <person name="Badger J."/>
            <person name="Barabote R.D."/>
            <person name="Bradley B."/>
            <person name="Brettin T.S."/>
            <person name="Brinkac L.M."/>
            <person name="Bruce D."/>
            <person name="Creasy T."/>
            <person name="Daugherty S.C."/>
            <person name="Davidsen T.M."/>
            <person name="DeBoy R.T."/>
            <person name="Detter J.C."/>
            <person name="Dodson R.J."/>
            <person name="Durkin A.S."/>
            <person name="Ganapathy A."/>
            <person name="Gwinn-Giglio M."/>
            <person name="Han C.S."/>
            <person name="Khouri H."/>
            <person name="Kiss H."/>
            <person name="Kothari S.P."/>
            <person name="Madupu R."/>
            <person name="Nelson K.E."/>
            <person name="Nelson W.C."/>
            <person name="Paulsen I."/>
            <person name="Penn K."/>
            <person name="Ren Q."/>
            <person name="Rosovitz M.J."/>
            <person name="Selengut J.D."/>
            <person name="Shrivastava S."/>
            <person name="Sullivan S.A."/>
            <person name="Tapia R."/>
            <person name="Thompson L.S."/>
            <person name="Watkins K.L."/>
            <person name="Yang Q."/>
            <person name="Yu C."/>
            <person name="Zafar N."/>
            <person name="Zhou L."/>
            <person name="Kuske C.R."/>
        </authorList>
    </citation>
    <scope>NUCLEOTIDE SEQUENCE [LARGE SCALE GENOMIC DNA]</scope>
    <source>
        <strain>Ellin345</strain>
    </source>
</reference>
<protein>
    <recommendedName>
        <fullName evidence="1">NADH-quinone oxidoreductase subunit B 2</fullName>
        <ecNumber evidence="1">7.1.1.-</ecNumber>
    </recommendedName>
    <alternativeName>
        <fullName evidence="1">NADH dehydrogenase I subunit B 2</fullName>
    </alternativeName>
    <alternativeName>
        <fullName evidence="1">NDH-1 subunit B 2</fullName>
    </alternativeName>
</protein>
<dbReference type="EC" id="7.1.1.-" evidence="1"/>
<dbReference type="EMBL" id="CP000360">
    <property type="protein sequence ID" value="ABF42359.1"/>
    <property type="molecule type" value="Genomic_DNA"/>
</dbReference>
<dbReference type="RefSeq" id="WP_011524158.1">
    <property type="nucleotide sequence ID" value="NC_008009.1"/>
</dbReference>
<dbReference type="SMR" id="Q1IL91"/>
<dbReference type="STRING" id="204669.Acid345_3358"/>
<dbReference type="EnsemblBacteria" id="ABF42359">
    <property type="protein sequence ID" value="ABF42359"/>
    <property type="gene ID" value="Acid345_3358"/>
</dbReference>
<dbReference type="KEGG" id="aba:Acid345_3358"/>
<dbReference type="eggNOG" id="COG0377">
    <property type="taxonomic scope" value="Bacteria"/>
</dbReference>
<dbReference type="HOGENOM" id="CLU_055737_7_3_0"/>
<dbReference type="OrthoDB" id="9786737at2"/>
<dbReference type="Proteomes" id="UP000002432">
    <property type="component" value="Chromosome"/>
</dbReference>
<dbReference type="GO" id="GO:0005886">
    <property type="term" value="C:plasma membrane"/>
    <property type="evidence" value="ECO:0007669"/>
    <property type="project" value="UniProtKB-SubCell"/>
</dbReference>
<dbReference type="GO" id="GO:0045271">
    <property type="term" value="C:respiratory chain complex I"/>
    <property type="evidence" value="ECO:0007669"/>
    <property type="project" value="TreeGrafter"/>
</dbReference>
<dbReference type="GO" id="GO:0051539">
    <property type="term" value="F:4 iron, 4 sulfur cluster binding"/>
    <property type="evidence" value="ECO:0007669"/>
    <property type="project" value="UniProtKB-KW"/>
</dbReference>
<dbReference type="GO" id="GO:0005506">
    <property type="term" value="F:iron ion binding"/>
    <property type="evidence" value="ECO:0007669"/>
    <property type="project" value="UniProtKB-UniRule"/>
</dbReference>
<dbReference type="GO" id="GO:0008137">
    <property type="term" value="F:NADH dehydrogenase (ubiquinone) activity"/>
    <property type="evidence" value="ECO:0007669"/>
    <property type="project" value="InterPro"/>
</dbReference>
<dbReference type="GO" id="GO:0050136">
    <property type="term" value="F:NADH:ubiquinone reductase (non-electrogenic) activity"/>
    <property type="evidence" value="ECO:0007669"/>
    <property type="project" value="UniProtKB-UniRule"/>
</dbReference>
<dbReference type="GO" id="GO:0048038">
    <property type="term" value="F:quinone binding"/>
    <property type="evidence" value="ECO:0007669"/>
    <property type="project" value="UniProtKB-KW"/>
</dbReference>
<dbReference type="GO" id="GO:0009060">
    <property type="term" value="P:aerobic respiration"/>
    <property type="evidence" value="ECO:0007669"/>
    <property type="project" value="TreeGrafter"/>
</dbReference>
<dbReference type="GO" id="GO:0015990">
    <property type="term" value="P:electron transport coupled proton transport"/>
    <property type="evidence" value="ECO:0007669"/>
    <property type="project" value="TreeGrafter"/>
</dbReference>
<dbReference type="FunFam" id="3.40.50.12280:FF:000002">
    <property type="entry name" value="NADH-quinone oxidoreductase subunit B"/>
    <property type="match status" value="1"/>
</dbReference>
<dbReference type="Gene3D" id="3.40.50.12280">
    <property type="match status" value="1"/>
</dbReference>
<dbReference type="HAMAP" id="MF_01356">
    <property type="entry name" value="NDH1_NuoB"/>
    <property type="match status" value="1"/>
</dbReference>
<dbReference type="InterPro" id="IPR006137">
    <property type="entry name" value="NADH_UbQ_OxRdtase-like_20kDa"/>
</dbReference>
<dbReference type="InterPro" id="IPR006138">
    <property type="entry name" value="NADH_UQ_OxRdtase_20Kd_su"/>
</dbReference>
<dbReference type="NCBIfam" id="TIGR01957">
    <property type="entry name" value="nuoB_fam"/>
    <property type="match status" value="1"/>
</dbReference>
<dbReference type="NCBIfam" id="NF005012">
    <property type="entry name" value="PRK06411.1"/>
    <property type="match status" value="1"/>
</dbReference>
<dbReference type="PANTHER" id="PTHR11995">
    <property type="entry name" value="NADH DEHYDROGENASE"/>
    <property type="match status" value="1"/>
</dbReference>
<dbReference type="PANTHER" id="PTHR11995:SF14">
    <property type="entry name" value="NADH DEHYDROGENASE [UBIQUINONE] IRON-SULFUR PROTEIN 7, MITOCHONDRIAL"/>
    <property type="match status" value="1"/>
</dbReference>
<dbReference type="Pfam" id="PF01058">
    <property type="entry name" value="Oxidored_q6"/>
    <property type="match status" value="1"/>
</dbReference>
<dbReference type="SUPFAM" id="SSF56770">
    <property type="entry name" value="HydA/Nqo6-like"/>
    <property type="match status" value="1"/>
</dbReference>
<name>NUOB2_KORVE</name>
<keyword id="KW-0004">4Fe-4S</keyword>
<keyword id="KW-0997">Cell inner membrane</keyword>
<keyword id="KW-1003">Cell membrane</keyword>
<keyword id="KW-0408">Iron</keyword>
<keyword id="KW-0411">Iron-sulfur</keyword>
<keyword id="KW-0472">Membrane</keyword>
<keyword id="KW-0479">Metal-binding</keyword>
<keyword id="KW-0520">NAD</keyword>
<keyword id="KW-0874">Quinone</keyword>
<keyword id="KW-1185">Reference proteome</keyword>
<keyword id="KW-1278">Translocase</keyword>
<keyword id="KW-0813">Transport</keyword>
<keyword id="KW-0830">Ubiquinone</keyword>
<proteinExistence type="inferred from homology"/>
<gene>
    <name evidence="1" type="primary">nuoB2</name>
    <name type="ordered locus">Acid345_3358</name>
</gene>
<accession>Q1IL91</accession>
<sequence>MSWIENKFEKNFLLSSVDYVFNWARKSSVWPMTFGLACCAIEMITASTARYDIARFGSEVFRPSPRQSDLMIVAGTVTLKMAPVVQRIYEQMPEPKWVMAMGACASVGGPFNTYATLQGVDKIVPVDVYVVGCPPRPENLFYGLLKLQDKIDHMTLAKRPTDVRLDETMLDEFRKSVRIAQAGSTVVIQPAAPPVVPGLQTK</sequence>
<organism>
    <name type="scientific">Koribacter versatilis (strain Ellin345)</name>
    <dbReference type="NCBI Taxonomy" id="204669"/>
    <lineage>
        <taxon>Bacteria</taxon>
        <taxon>Pseudomonadati</taxon>
        <taxon>Acidobacteriota</taxon>
        <taxon>Terriglobia</taxon>
        <taxon>Terriglobales</taxon>
        <taxon>Candidatus Korobacteraceae</taxon>
        <taxon>Candidatus Korobacter</taxon>
    </lineage>
</organism>
<feature type="chain" id="PRO_0000376102" description="NADH-quinone oxidoreductase subunit B 2">
    <location>
        <begin position="1"/>
        <end position="202"/>
    </location>
</feature>
<feature type="binding site" evidence="1">
    <location>
        <position position="38"/>
    </location>
    <ligand>
        <name>[4Fe-4S] cluster</name>
        <dbReference type="ChEBI" id="CHEBI:49883"/>
    </ligand>
</feature>
<feature type="binding site" evidence="1">
    <location>
        <position position="39"/>
    </location>
    <ligand>
        <name>[4Fe-4S] cluster</name>
        <dbReference type="ChEBI" id="CHEBI:49883"/>
    </ligand>
</feature>
<feature type="binding site" evidence="1">
    <location>
        <position position="104"/>
    </location>
    <ligand>
        <name>[4Fe-4S] cluster</name>
        <dbReference type="ChEBI" id="CHEBI:49883"/>
    </ligand>
</feature>
<feature type="binding site" evidence="1">
    <location>
        <position position="133"/>
    </location>
    <ligand>
        <name>[4Fe-4S] cluster</name>
        <dbReference type="ChEBI" id="CHEBI:49883"/>
    </ligand>
</feature>
<comment type="function">
    <text evidence="1">NDH-1 shuttles electrons from NADH, via FMN and iron-sulfur (Fe-S) centers, to quinones in the respiratory chain. The immediate electron acceptor for the enzyme in this species is believed to be ubiquinone. Couples the redox reaction to proton translocation (for every two electrons transferred, four hydrogen ions are translocated across the cytoplasmic membrane), and thus conserves the redox energy in a proton gradient.</text>
</comment>
<comment type="catalytic activity">
    <reaction evidence="1">
        <text>a quinone + NADH + 5 H(+)(in) = a quinol + NAD(+) + 4 H(+)(out)</text>
        <dbReference type="Rhea" id="RHEA:57888"/>
        <dbReference type="ChEBI" id="CHEBI:15378"/>
        <dbReference type="ChEBI" id="CHEBI:24646"/>
        <dbReference type="ChEBI" id="CHEBI:57540"/>
        <dbReference type="ChEBI" id="CHEBI:57945"/>
        <dbReference type="ChEBI" id="CHEBI:132124"/>
    </reaction>
</comment>
<comment type="cofactor">
    <cofactor evidence="1">
        <name>[4Fe-4S] cluster</name>
        <dbReference type="ChEBI" id="CHEBI:49883"/>
    </cofactor>
    <text evidence="1">Binds 1 [4Fe-4S] cluster.</text>
</comment>
<comment type="subunit">
    <text evidence="1">NDH-1 is composed of 14 different subunits. Subunits NuoB, C, D, E, F, and G constitute the peripheral sector of the complex.</text>
</comment>
<comment type="subcellular location">
    <subcellularLocation>
        <location evidence="1">Cell inner membrane</location>
        <topology evidence="1">Peripheral membrane protein</topology>
        <orientation evidence="1">Cytoplasmic side</orientation>
    </subcellularLocation>
</comment>
<comment type="similarity">
    <text evidence="1">Belongs to the complex I 20 kDa subunit family.</text>
</comment>